<gene>
    <name type="primary">PPOX1</name>
    <name type="synonym">HEMG1</name>
    <name type="synonym">PPOP1</name>
    <name type="ordered locus">At4g01690</name>
    <name type="ORF">T15B16.13</name>
</gene>
<comment type="function">
    <text evidence="3">Catalyzes the 6-electron oxidation of protoporphyrinogen-IX to form protoporphyrin-IX.</text>
</comment>
<comment type="catalytic activity">
    <reaction evidence="3">
        <text>protoporphyrinogen IX + 3 O2 = protoporphyrin IX + 3 H2O2</text>
        <dbReference type="Rhea" id="RHEA:25576"/>
        <dbReference type="ChEBI" id="CHEBI:15379"/>
        <dbReference type="ChEBI" id="CHEBI:16240"/>
        <dbReference type="ChEBI" id="CHEBI:57306"/>
        <dbReference type="ChEBI" id="CHEBI:57307"/>
        <dbReference type="EC" id="1.3.3.4"/>
    </reaction>
</comment>
<comment type="cofactor">
    <cofactor evidence="1">
        <name>FAD</name>
        <dbReference type="ChEBI" id="CHEBI:57692"/>
    </cofactor>
    <text evidence="1">Binds 1 FAD per subunit.</text>
</comment>
<comment type="activity regulation">
    <text evidence="3">Inhibited by acifluorfen.</text>
</comment>
<comment type="pathway">
    <text>Porphyrin-containing compound metabolism; protoporphyrin-IX biosynthesis; protoporphyrin-IX from protoporphyrinogen-IX: step 1/1.</text>
</comment>
<comment type="pathway">
    <text>Porphyrin-containing compound metabolism; chlorophyll biosynthesis.</text>
</comment>
<comment type="subcellular location">
    <subcellularLocation>
        <location evidence="4">Plastid</location>
        <location evidence="4">Chloroplast</location>
    </subcellularLocation>
</comment>
<comment type="alternative products">
    <event type="alternative splicing"/>
    <isoform>
        <id>P55826-1</id>
        <name>1</name>
        <sequence type="displayed"/>
    </isoform>
    <isoform>
        <id>P55826-2</id>
        <name>2</name>
        <sequence type="described" ref="VSP_046547"/>
    </isoform>
</comment>
<comment type="tissue specificity">
    <text>Expressed at high levels in the leaves and at low levels in the roots and floral buds.</text>
</comment>
<comment type="similarity">
    <text evidence="4">Belongs to the protoporphyrinogen/coproporphyrinogen oxidase family. Protoporphyrinogen oxidase subfamily.</text>
</comment>
<comment type="sequence caution" evidence="4">
    <conflict type="erroneous gene model prediction">
        <sequence resource="EMBL-CDS" id="AAC72870"/>
    </conflict>
</comment>
<sequence>MELSLLRPTTQSLLPSFSKPNLRLNVYKPLRLRCSVAGGPTVGSSKIEGGGGTTITTDCVIVGGGISGLCIAQALATKHPDAAPNLIVTEAKDRVGGNIITREENGFLWEEGPNSFQPSDPMLTMVVDSGLKDDLVLGDPTAPRFVLWNGKLRPVPSKLTDLPFFDLMSIGGKIRAGFGALGIRPSPPGREESVEEFVRRNLGDEVFERLIEPFCSGVYAGDPSKLSMKAAFGKVWKLEQNGGSIIGGTFKAIQERKNAPKAERDPRLPKPQGQTVGSFRKGLRMLPEAISARLGSKVKLSWKLSGITKLESGGYNLTYETPDGLVSVQSKSVVMTVPSHVASGLLRPLSESAANALSKLYYPPVAAVSISYPKEAIRTECLIDGELKGFGQLHPRTQGVETLGTIYSSSLFPNRAPPGRILLLNYIGGSTNTGILSKSEGELVEAVDRDLRKMLIKPNSTDPLKLGVRVWPQAIPQFLVGHFDILDTAKSSLTSSGYEGLFLGGNYVAGVALGRCVEGAYETAIEVNNFMSRYAYK</sequence>
<accession>P55826</accession>
<accession>F4JG44</accession>
<accession>Q5M730</accession>
<accession>Q94F25</accession>
<accession>Q9ZSI5</accession>
<organism>
    <name type="scientific">Arabidopsis thaliana</name>
    <name type="common">Mouse-ear cress</name>
    <dbReference type="NCBI Taxonomy" id="3702"/>
    <lineage>
        <taxon>Eukaryota</taxon>
        <taxon>Viridiplantae</taxon>
        <taxon>Streptophyta</taxon>
        <taxon>Embryophyta</taxon>
        <taxon>Tracheophyta</taxon>
        <taxon>Spermatophyta</taxon>
        <taxon>Magnoliopsida</taxon>
        <taxon>eudicotyledons</taxon>
        <taxon>Gunneridae</taxon>
        <taxon>Pentapetalae</taxon>
        <taxon>rosids</taxon>
        <taxon>malvids</taxon>
        <taxon>Brassicales</taxon>
        <taxon>Brassicaceae</taxon>
        <taxon>Camelineae</taxon>
        <taxon>Arabidopsis</taxon>
    </lineage>
</organism>
<keyword id="KW-0007">Acetylation</keyword>
<keyword id="KW-0025">Alternative splicing</keyword>
<keyword id="KW-0149">Chlorophyll biosynthesis</keyword>
<keyword id="KW-0150">Chloroplast</keyword>
<keyword id="KW-0274">FAD</keyword>
<keyword id="KW-0285">Flavoprotein</keyword>
<keyword id="KW-0350">Heme biosynthesis</keyword>
<keyword id="KW-0560">Oxidoreductase</keyword>
<keyword id="KW-0934">Plastid</keyword>
<keyword id="KW-0627">Porphyrin biosynthesis</keyword>
<keyword id="KW-1185">Reference proteome</keyword>
<keyword id="KW-0809">Transit peptide</keyword>
<evidence type="ECO:0000250" key="1"/>
<evidence type="ECO:0000256" key="2">
    <source>
        <dbReference type="SAM" id="MobiDB-lite"/>
    </source>
</evidence>
<evidence type="ECO:0000269" key="3">
    <source>
    </source>
</evidence>
<evidence type="ECO:0000305" key="4"/>
<evidence type="ECO:0007744" key="5">
    <source>
    </source>
</evidence>
<name>PPOC_ARATH</name>
<proteinExistence type="evidence at protein level"/>
<dbReference type="EC" id="1.3.3.4"/>
<dbReference type="EMBL" id="D83139">
    <property type="protein sequence ID" value="BAA11820.1"/>
    <property type="molecule type" value="mRNA"/>
</dbReference>
<dbReference type="EMBL" id="AF104919">
    <property type="protein sequence ID" value="AAC72870.1"/>
    <property type="status" value="ALT_SEQ"/>
    <property type="molecule type" value="Genomic_DNA"/>
</dbReference>
<dbReference type="EMBL" id="AL161492">
    <property type="protein sequence ID" value="CAB77739.1"/>
    <property type="molecule type" value="Genomic_DNA"/>
</dbReference>
<dbReference type="EMBL" id="CP002687">
    <property type="protein sequence ID" value="AEE82064.1"/>
    <property type="molecule type" value="Genomic_DNA"/>
</dbReference>
<dbReference type="EMBL" id="CP002687">
    <property type="protein sequence ID" value="AEE82065.1"/>
    <property type="molecule type" value="Genomic_DNA"/>
</dbReference>
<dbReference type="EMBL" id="AF386944">
    <property type="protein sequence ID" value="AAK62389.1"/>
    <property type="molecule type" value="mRNA"/>
</dbReference>
<dbReference type="EMBL" id="BT020418">
    <property type="protein sequence ID" value="AAV97809.1"/>
    <property type="molecule type" value="mRNA"/>
</dbReference>
<dbReference type="EMBL" id="BT020535">
    <property type="protein sequence ID" value="AAW70381.1"/>
    <property type="molecule type" value="mRNA"/>
</dbReference>
<dbReference type="PIR" id="G85021">
    <property type="entry name" value="G85021"/>
</dbReference>
<dbReference type="PIR" id="T02005">
    <property type="entry name" value="T02005"/>
</dbReference>
<dbReference type="RefSeq" id="NP_192078.1">
    <molecule id="P55826-1"/>
    <property type="nucleotide sequence ID" value="NM_116399.4"/>
</dbReference>
<dbReference type="RefSeq" id="NP_849283.1">
    <molecule id="P55826-2"/>
    <property type="nucleotide sequence ID" value="NM_178952.2"/>
</dbReference>
<dbReference type="SMR" id="P55826"/>
<dbReference type="BioGRID" id="13282">
    <property type="interactions" value="3"/>
</dbReference>
<dbReference type="FunCoup" id="P55826">
    <property type="interactions" value="2900"/>
</dbReference>
<dbReference type="STRING" id="3702.P55826"/>
<dbReference type="ChEMBL" id="CHEMBL2366479"/>
<dbReference type="GlyGen" id="P55826">
    <property type="glycosylation" value="1 site"/>
</dbReference>
<dbReference type="iPTMnet" id="P55826"/>
<dbReference type="PaxDb" id="3702-AT4G01690.1"/>
<dbReference type="ProteomicsDB" id="236592">
    <molecule id="P55826-1"/>
</dbReference>
<dbReference type="EnsemblPlants" id="AT4G01690.1">
    <molecule id="P55826-1"/>
    <property type="protein sequence ID" value="AT4G01690.1"/>
    <property type="gene ID" value="AT4G01690"/>
</dbReference>
<dbReference type="EnsemblPlants" id="AT4G01690.2">
    <molecule id="P55826-2"/>
    <property type="protein sequence ID" value="AT4G01690.2"/>
    <property type="gene ID" value="AT4G01690"/>
</dbReference>
<dbReference type="GeneID" id="827991"/>
<dbReference type="Gramene" id="AT4G01690.1">
    <molecule id="P55826-1"/>
    <property type="protein sequence ID" value="AT4G01690.1"/>
    <property type="gene ID" value="AT4G01690"/>
</dbReference>
<dbReference type="Gramene" id="AT4G01690.2">
    <molecule id="P55826-2"/>
    <property type="protein sequence ID" value="AT4G01690.2"/>
    <property type="gene ID" value="AT4G01690"/>
</dbReference>
<dbReference type="KEGG" id="ath:AT4G01690"/>
<dbReference type="Araport" id="AT4G01690"/>
<dbReference type="TAIR" id="AT4G01690">
    <property type="gene designation" value="PPOX"/>
</dbReference>
<dbReference type="eggNOG" id="KOG1276">
    <property type="taxonomic scope" value="Eukaryota"/>
</dbReference>
<dbReference type="HOGENOM" id="CLU_009629_3_0_1"/>
<dbReference type="InParanoid" id="P55826"/>
<dbReference type="OMA" id="WFDQWFG"/>
<dbReference type="OrthoDB" id="419752at2759"/>
<dbReference type="PhylomeDB" id="P55826"/>
<dbReference type="BioCyc" id="ARA:AT4G01690-MONOMER"/>
<dbReference type="BioCyc" id="MetaCyc:AT4G01690-MONOMER"/>
<dbReference type="BRENDA" id="1.3.3.4">
    <property type="organism ID" value="399"/>
</dbReference>
<dbReference type="UniPathway" id="UPA00251">
    <property type="reaction ID" value="UER00324"/>
</dbReference>
<dbReference type="UniPathway" id="UPA00668"/>
<dbReference type="PRO" id="PR:P55826"/>
<dbReference type="Proteomes" id="UP000006548">
    <property type="component" value="Chromosome 4"/>
</dbReference>
<dbReference type="ExpressionAtlas" id="P55826">
    <property type="expression patterns" value="baseline and differential"/>
</dbReference>
<dbReference type="GO" id="GO:0009507">
    <property type="term" value="C:chloroplast"/>
    <property type="evidence" value="ECO:0007005"/>
    <property type="project" value="TAIR"/>
</dbReference>
<dbReference type="GO" id="GO:0009941">
    <property type="term" value="C:chloroplast envelope"/>
    <property type="evidence" value="ECO:0007005"/>
    <property type="project" value="TAIR"/>
</dbReference>
<dbReference type="GO" id="GO:0009534">
    <property type="term" value="C:chloroplast thylakoid"/>
    <property type="evidence" value="ECO:0007005"/>
    <property type="project" value="TAIR"/>
</dbReference>
<dbReference type="GO" id="GO:0005829">
    <property type="term" value="C:cytosol"/>
    <property type="evidence" value="ECO:0007005"/>
    <property type="project" value="TAIR"/>
</dbReference>
<dbReference type="GO" id="GO:0004729">
    <property type="term" value="F:oxygen-dependent protoporphyrinogen oxidase activity"/>
    <property type="evidence" value="ECO:0007669"/>
    <property type="project" value="UniProtKB-EC"/>
</dbReference>
<dbReference type="GO" id="GO:0015995">
    <property type="term" value="P:chlorophyll biosynthetic process"/>
    <property type="evidence" value="ECO:0007669"/>
    <property type="project" value="UniProtKB-UniPathway"/>
</dbReference>
<dbReference type="GO" id="GO:0006779">
    <property type="term" value="P:porphyrin-containing compound biosynthetic process"/>
    <property type="evidence" value="ECO:0000304"/>
    <property type="project" value="TAIR"/>
</dbReference>
<dbReference type="GO" id="GO:0006782">
    <property type="term" value="P:protoporphyrinogen IX biosynthetic process"/>
    <property type="evidence" value="ECO:0007669"/>
    <property type="project" value="UniProtKB-UniPathway"/>
</dbReference>
<dbReference type="FunFam" id="1.10.3110.10:FF:000002">
    <property type="entry name" value="Protoporphyrinogen oxidase"/>
    <property type="match status" value="1"/>
</dbReference>
<dbReference type="Gene3D" id="3.50.50.60">
    <property type="entry name" value="FAD/NAD(P)-binding domain"/>
    <property type="match status" value="1"/>
</dbReference>
<dbReference type="Gene3D" id="1.10.3110.10">
    <property type="entry name" value="protoporphyrinogen ix oxidase, domain 3"/>
    <property type="match status" value="1"/>
</dbReference>
<dbReference type="Gene3D" id="3.90.660.20">
    <property type="entry name" value="Protoporphyrinogen oxidase, mitochondrial, domain 2"/>
    <property type="match status" value="1"/>
</dbReference>
<dbReference type="InterPro" id="IPR002937">
    <property type="entry name" value="Amino_oxidase"/>
</dbReference>
<dbReference type="InterPro" id="IPR036188">
    <property type="entry name" value="FAD/NAD-bd_sf"/>
</dbReference>
<dbReference type="InterPro" id="IPR004572">
    <property type="entry name" value="Protoporphyrinogen_oxidase"/>
</dbReference>
<dbReference type="InterPro" id="IPR050464">
    <property type="entry name" value="Zeta_carotene_desat/Oxidored"/>
</dbReference>
<dbReference type="NCBIfam" id="TIGR00562">
    <property type="entry name" value="proto_IX_ox"/>
    <property type="match status" value="1"/>
</dbReference>
<dbReference type="PANTHER" id="PTHR42923">
    <property type="entry name" value="PROTOPORPHYRINOGEN OXIDASE"/>
    <property type="match status" value="1"/>
</dbReference>
<dbReference type="PANTHER" id="PTHR42923:SF3">
    <property type="entry name" value="PROTOPORPHYRINOGEN OXIDASE"/>
    <property type="match status" value="1"/>
</dbReference>
<dbReference type="Pfam" id="PF01593">
    <property type="entry name" value="Amino_oxidase"/>
    <property type="match status" value="1"/>
</dbReference>
<dbReference type="SUPFAM" id="SSF54373">
    <property type="entry name" value="FAD-linked reductases, C-terminal domain"/>
    <property type="match status" value="1"/>
</dbReference>
<dbReference type="SUPFAM" id="SSF51905">
    <property type="entry name" value="FAD/NAD(P)-binding domain"/>
    <property type="match status" value="1"/>
</dbReference>
<feature type="transit peptide" description="Chloroplast" evidence="5">
    <location>
        <begin position="1"/>
        <end position="34"/>
    </location>
</feature>
<feature type="chain" id="PRO_0000013325" description="Protoporphyrinogen oxidase 1, chloroplastic">
    <location>
        <begin position="35"/>
        <end position="537"/>
    </location>
</feature>
<feature type="region of interest" description="Disordered" evidence="2">
    <location>
        <begin position="256"/>
        <end position="275"/>
    </location>
</feature>
<feature type="compositionally biased region" description="Basic and acidic residues" evidence="2">
    <location>
        <begin position="256"/>
        <end position="268"/>
    </location>
</feature>
<feature type="binding site" evidence="1">
    <location>
        <begin position="63"/>
        <end position="68"/>
    </location>
    <ligand>
        <name>FAD</name>
        <dbReference type="ChEBI" id="CHEBI:57692"/>
    </ligand>
</feature>
<feature type="binding site" evidence="1">
    <location>
        <begin position="90"/>
        <end position="91"/>
    </location>
    <ligand>
        <name>FAD</name>
        <dbReference type="ChEBI" id="CHEBI:57692"/>
    </ligand>
</feature>
<feature type="binding site" evidence="1">
    <location>
        <begin position="112"/>
        <end position="115"/>
    </location>
    <ligand>
        <name>FAD</name>
        <dbReference type="ChEBI" id="CHEBI:57692"/>
    </ligand>
</feature>
<feature type="binding site" evidence="1">
    <location>
        <begin position="511"/>
        <end position="513"/>
    </location>
    <ligand>
        <name>FAD</name>
        <dbReference type="ChEBI" id="CHEBI:57692"/>
    </ligand>
</feature>
<feature type="modified residue" description="N-acetylserine" evidence="5">
    <location>
        <position position="35"/>
    </location>
</feature>
<feature type="splice variant" id="VSP_046547" description="In isoform 2." evidence="4">
    <location>
        <begin position="447"/>
        <end position="477"/>
    </location>
</feature>
<feature type="sequence conflict" description="In Ref. 4; AAK62389." evidence="4" ref="4">
    <original>W</original>
    <variation>C</variation>
    <location>
        <position position="302"/>
    </location>
</feature>
<protein>
    <recommendedName>
        <fullName>Protoporphyrinogen oxidase 1, chloroplastic</fullName>
        <shortName>PPO1</shortName>
        <ecNumber>1.3.3.4</ecNumber>
    </recommendedName>
</protein>
<reference key="1">
    <citation type="journal article" date="1996" name="Gene">
        <title>Molecular cloning and characterization of a cDNA that encodes protoporphyrinogen oxidase of Arabidopsis thaliana.</title>
        <authorList>
            <person name="Narita S."/>
            <person name="Tanaka R."/>
            <person name="Ito T."/>
            <person name="Okada K."/>
            <person name="Taketani S."/>
            <person name="Inokuchi H."/>
        </authorList>
    </citation>
    <scope>NUCLEOTIDE SEQUENCE [MRNA] (ISOFORM 1)</scope>
    <scope>FUNCTION</scope>
    <scope>CATALYTIC ACTIVITY</scope>
    <scope>ACTIVITY REGULATION</scope>
</reference>
<reference key="2">
    <citation type="journal article" date="1999" name="Nature">
        <title>Sequence and analysis of chromosome 4 of the plant Arabidopsis thaliana.</title>
        <authorList>
            <person name="Mayer K.F.X."/>
            <person name="Schueller C."/>
            <person name="Wambutt R."/>
            <person name="Murphy G."/>
            <person name="Volckaert G."/>
            <person name="Pohl T."/>
            <person name="Duesterhoeft A."/>
            <person name="Stiekema W."/>
            <person name="Entian K.-D."/>
            <person name="Terryn N."/>
            <person name="Harris B."/>
            <person name="Ansorge W."/>
            <person name="Brandt P."/>
            <person name="Grivell L.A."/>
            <person name="Rieger M."/>
            <person name="Weichselgartner M."/>
            <person name="de Simone V."/>
            <person name="Obermaier B."/>
            <person name="Mache R."/>
            <person name="Mueller M."/>
            <person name="Kreis M."/>
            <person name="Delseny M."/>
            <person name="Puigdomenech P."/>
            <person name="Watson M."/>
            <person name="Schmidtheini T."/>
            <person name="Reichert B."/>
            <person name="Portetelle D."/>
            <person name="Perez-Alonso M."/>
            <person name="Boutry M."/>
            <person name="Bancroft I."/>
            <person name="Vos P."/>
            <person name="Hoheisel J."/>
            <person name="Zimmermann W."/>
            <person name="Wedler H."/>
            <person name="Ridley P."/>
            <person name="Langham S.-A."/>
            <person name="McCullagh B."/>
            <person name="Bilham L."/>
            <person name="Robben J."/>
            <person name="van der Schueren J."/>
            <person name="Grymonprez B."/>
            <person name="Chuang Y.-J."/>
            <person name="Vandenbussche F."/>
            <person name="Braeken M."/>
            <person name="Weltjens I."/>
            <person name="Voet M."/>
            <person name="Bastiaens I."/>
            <person name="Aert R."/>
            <person name="Defoor E."/>
            <person name="Weitzenegger T."/>
            <person name="Bothe G."/>
            <person name="Ramsperger U."/>
            <person name="Hilbert H."/>
            <person name="Braun M."/>
            <person name="Holzer E."/>
            <person name="Brandt A."/>
            <person name="Peters S."/>
            <person name="van Staveren M."/>
            <person name="Dirkse W."/>
            <person name="Mooijman P."/>
            <person name="Klein Lankhorst R."/>
            <person name="Rose M."/>
            <person name="Hauf J."/>
            <person name="Koetter P."/>
            <person name="Berneiser S."/>
            <person name="Hempel S."/>
            <person name="Feldpausch M."/>
            <person name="Lamberth S."/>
            <person name="Van den Daele H."/>
            <person name="De Keyser A."/>
            <person name="Buysshaert C."/>
            <person name="Gielen J."/>
            <person name="Villarroel R."/>
            <person name="De Clercq R."/>
            <person name="van Montagu M."/>
            <person name="Rogers J."/>
            <person name="Cronin A."/>
            <person name="Quail M.A."/>
            <person name="Bray-Allen S."/>
            <person name="Clark L."/>
            <person name="Doggett J."/>
            <person name="Hall S."/>
            <person name="Kay M."/>
            <person name="Lennard N."/>
            <person name="McLay K."/>
            <person name="Mayes R."/>
            <person name="Pettett A."/>
            <person name="Rajandream M.A."/>
            <person name="Lyne M."/>
            <person name="Benes V."/>
            <person name="Rechmann S."/>
            <person name="Borkova D."/>
            <person name="Bloecker H."/>
            <person name="Scharfe M."/>
            <person name="Grimm M."/>
            <person name="Loehnert T.-H."/>
            <person name="Dose S."/>
            <person name="de Haan M."/>
            <person name="Maarse A.C."/>
            <person name="Schaefer M."/>
            <person name="Mueller-Auer S."/>
            <person name="Gabel C."/>
            <person name="Fuchs M."/>
            <person name="Fartmann B."/>
            <person name="Granderath K."/>
            <person name="Dauner D."/>
            <person name="Herzl A."/>
            <person name="Neumann S."/>
            <person name="Argiriou A."/>
            <person name="Vitale D."/>
            <person name="Liguori R."/>
            <person name="Piravandi E."/>
            <person name="Massenet O."/>
            <person name="Quigley F."/>
            <person name="Clabauld G."/>
            <person name="Muendlein A."/>
            <person name="Felber R."/>
            <person name="Schnabl S."/>
            <person name="Hiller R."/>
            <person name="Schmidt W."/>
            <person name="Lecharny A."/>
            <person name="Aubourg S."/>
            <person name="Chefdor F."/>
            <person name="Cooke R."/>
            <person name="Berger C."/>
            <person name="Monfort A."/>
            <person name="Casacuberta E."/>
            <person name="Gibbons T."/>
            <person name="Weber N."/>
            <person name="Vandenbol M."/>
            <person name="Bargues M."/>
            <person name="Terol J."/>
            <person name="Torres A."/>
            <person name="Perez-Perez A."/>
            <person name="Purnelle B."/>
            <person name="Bent E."/>
            <person name="Johnson S."/>
            <person name="Tacon D."/>
            <person name="Jesse T."/>
            <person name="Heijnen L."/>
            <person name="Schwarz S."/>
            <person name="Scholler P."/>
            <person name="Heber S."/>
            <person name="Francs P."/>
            <person name="Bielke C."/>
            <person name="Frishman D."/>
            <person name="Haase D."/>
            <person name="Lemcke K."/>
            <person name="Mewes H.-W."/>
            <person name="Stocker S."/>
            <person name="Zaccaria P."/>
            <person name="Bevan M."/>
            <person name="Wilson R.K."/>
            <person name="de la Bastide M."/>
            <person name="Habermann K."/>
            <person name="Parnell L."/>
            <person name="Dedhia N."/>
            <person name="Gnoj L."/>
            <person name="Schutz K."/>
            <person name="Huang E."/>
            <person name="Spiegel L."/>
            <person name="Sekhon M."/>
            <person name="Murray J."/>
            <person name="Sheet P."/>
            <person name="Cordes M."/>
            <person name="Abu-Threideh J."/>
            <person name="Stoneking T."/>
            <person name="Kalicki J."/>
            <person name="Graves T."/>
            <person name="Harmon G."/>
            <person name="Edwards J."/>
            <person name="Latreille P."/>
            <person name="Courtney L."/>
            <person name="Cloud J."/>
            <person name="Abbott A."/>
            <person name="Scott K."/>
            <person name="Johnson D."/>
            <person name="Minx P."/>
            <person name="Bentley D."/>
            <person name="Fulton B."/>
            <person name="Miller N."/>
            <person name="Greco T."/>
            <person name="Kemp K."/>
            <person name="Kramer J."/>
            <person name="Fulton L."/>
            <person name="Mardis E."/>
            <person name="Dante M."/>
            <person name="Pepin K."/>
            <person name="Hillier L.W."/>
            <person name="Nelson J."/>
            <person name="Spieth J."/>
            <person name="Ryan E."/>
            <person name="Andrews S."/>
            <person name="Geisel C."/>
            <person name="Layman D."/>
            <person name="Du H."/>
            <person name="Ali J."/>
            <person name="Berghoff A."/>
            <person name="Jones K."/>
            <person name="Drone K."/>
            <person name="Cotton M."/>
            <person name="Joshu C."/>
            <person name="Antonoiu B."/>
            <person name="Zidanic M."/>
            <person name="Strong C."/>
            <person name="Sun H."/>
            <person name="Lamar B."/>
            <person name="Yordan C."/>
            <person name="Ma P."/>
            <person name="Zhong J."/>
            <person name="Preston R."/>
            <person name="Vil D."/>
            <person name="Shekher M."/>
            <person name="Matero A."/>
            <person name="Shah R."/>
            <person name="Swaby I.K."/>
            <person name="O'Shaughnessy A."/>
            <person name="Rodriguez M."/>
            <person name="Hoffman J."/>
            <person name="Till S."/>
            <person name="Granat S."/>
            <person name="Shohdy N."/>
            <person name="Hasegawa A."/>
            <person name="Hameed A."/>
            <person name="Lodhi M."/>
            <person name="Johnson A."/>
            <person name="Chen E."/>
            <person name="Marra M.A."/>
            <person name="Martienssen R."/>
            <person name="McCombie W.R."/>
        </authorList>
    </citation>
    <scope>NUCLEOTIDE SEQUENCE [LARGE SCALE GENOMIC DNA]</scope>
    <source>
        <strain>cv. Columbia</strain>
    </source>
</reference>
<reference key="3">
    <citation type="journal article" date="2017" name="Plant J.">
        <title>Araport11: a complete reannotation of the Arabidopsis thaliana reference genome.</title>
        <authorList>
            <person name="Cheng C.Y."/>
            <person name="Krishnakumar V."/>
            <person name="Chan A.P."/>
            <person name="Thibaud-Nissen F."/>
            <person name="Schobel S."/>
            <person name="Town C.D."/>
        </authorList>
    </citation>
    <scope>GENOME REANNOTATION</scope>
    <source>
        <strain>cv. Columbia</strain>
    </source>
</reference>
<reference key="4">
    <citation type="journal article" date="2003" name="Science">
        <title>Empirical analysis of transcriptional activity in the Arabidopsis genome.</title>
        <authorList>
            <person name="Yamada K."/>
            <person name="Lim J."/>
            <person name="Dale J.M."/>
            <person name="Chen H."/>
            <person name="Shinn P."/>
            <person name="Palm C.J."/>
            <person name="Southwick A.M."/>
            <person name="Wu H.C."/>
            <person name="Kim C.J."/>
            <person name="Nguyen M."/>
            <person name="Pham P.K."/>
            <person name="Cheuk R.F."/>
            <person name="Karlin-Newmann G."/>
            <person name="Liu S.X."/>
            <person name="Lam B."/>
            <person name="Sakano H."/>
            <person name="Wu T."/>
            <person name="Yu G."/>
            <person name="Miranda M."/>
            <person name="Quach H.L."/>
            <person name="Tripp M."/>
            <person name="Chang C.H."/>
            <person name="Lee J.M."/>
            <person name="Toriumi M.J."/>
            <person name="Chan M.M."/>
            <person name="Tang C.C."/>
            <person name="Onodera C.S."/>
            <person name="Deng J.M."/>
            <person name="Akiyama K."/>
            <person name="Ansari Y."/>
            <person name="Arakawa T."/>
            <person name="Banh J."/>
            <person name="Banno F."/>
            <person name="Bowser L."/>
            <person name="Brooks S.Y."/>
            <person name="Carninci P."/>
            <person name="Chao Q."/>
            <person name="Choy N."/>
            <person name="Enju A."/>
            <person name="Goldsmith A.D."/>
            <person name="Gurjal M."/>
            <person name="Hansen N.F."/>
            <person name="Hayashizaki Y."/>
            <person name="Johnson-Hopson C."/>
            <person name="Hsuan V.W."/>
            <person name="Iida K."/>
            <person name="Karnes M."/>
            <person name="Khan S."/>
            <person name="Koesema E."/>
            <person name="Ishida J."/>
            <person name="Jiang P.X."/>
            <person name="Jones T."/>
            <person name="Kawai J."/>
            <person name="Kamiya A."/>
            <person name="Meyers C."/>
            <person name="Nakajima M."/>
            <person name="Narusaka M."/>
            <person name="Seki M."/>
            <person name="Sakurai T."/>
            <person name="Satou M."/>
            <person name="Tamse R."/>
            <person name="Vaysberg M."/>
            <person name="Wallender E.K."/>
            <person name="Wong C."/>
            <person name="Yamamura Y."/>
            <person name="Yuan S."/>
            <person name="Shinozaki K."/>
            <person name="Davis R.W."/>
            <person name="Theologis A."/>
            <person name="Ecker J.R."/>
        </authorList>
    </citation>
    <scope>NUCLEOTIDE SEQUENCE [LARGE SCALE MRNA] (ISOFORM 1)</scope>
    <source>
        <strain>cv. Columbia</strain>
    </source>
</reference>
<reference key="5">
    <citation type="submission" date="2005-01" db="EMBL/GenBank/DDBJ databases">
        <title>Arabidopsis ORF clones.</title>
        <authorList>
            <person name="Cheuk R."/>
            <person name="Chen H."/>
            <person name="Kim C.J."/>
            <person name="Shinn P."/>
            <person name="Ecker J.R."/>
        </authorList>
    </citation>
    <scope>NUCLEOTIDE SEQUENCE [LARGE SCALE MRNA] (ISOFORM 1)</scope>
</reference>
<reference key="6">
    <citation type="journal article" date="2012" name="Mol. Cell. Proteomics">
        <title>Comparative large-scale characterisation of plant vs. mammal proteins reveals similar and idiosyncratic N-alpha acetylation features.</title>
        <authorList>
            <person name="Bienvenut W.V."/>
            <person name="Sumpton D."/>
            <person name="Martinez A."/>
            <person name="Lilla S."/>
            <person name="Espagne C."/>
            <person name="Meinnel T."/>
            <person name="Giglione C."/>
        </authorList>
    </citation>
    <scope>ACETYLATION [LARGE SCALE ANALYSIS] AT SER-35</scope>
    <scope>CLEAVAGE OF TRANSIT PEPTIDE [LARGE SCALE ANALYSIS] AFTER CYS-34</scope>
    <scope>IDENTIFICATION BY MASS SPECTROMETRY [LARGE SCALE ANALYSIS]</scope>
</reference>